<gene>
    <name type="primary">bsr</name>
</gene>
<reference key="1">
    <citation type="journal article" date="1991" name="Agric. Biol. Chem.">
        <title>Nucleotide sequence of the bsr gene and N-terminal amino acid sequence of blasticidin S deaminase from blasticidin S resistant Escherichia coli TK121.</title>
        <authorList>
            <person name="Kobayashi K."/>
            <person name="Kamakura T."/>
            <person name="Tanaka T."/>
            <person name="Yamaguchi I."/>
            <person name="Endo T."/>
        </authorList>
    </citation>
    <scope>NUCLEOTIDE SEQUENCE [GENOMIC DNA]</scope>
    <scope>PROTEIN SEQUENCE OF 1-46</scope>
    <scope>FUNCTION</scope>
    <source>
        <strain>K55-S1</strain>
    </source>
</reference>
<feature type="chain" id="PRO_0000171690" description="Blasticidin-S deaminase">
    <location>
        <begin position="1"/>
        <end position="140"/>
    </location>
</feature>
<feature type="domain" description="CMP/dCMP-type deaminase" evidence="2">
    <location>
        <begin position="8"/>
        <end position="140"/>
    </location>
</feature>
<feature type="active site" description="Proton donor" evidence="1">
    <location>
        <position position="61"/>
    </location>
</feature>
<feature type="binding site" evidence="1">
    <location>
        <position position="59"/>
    </location>
    <ligand>
        <name>Zn(2+)</name>
        <dbReference type="ChEBI" id="CHEBI:29105"/>
        <note>catalytic</note>
    </ligand>
</feature>
<feature type="binding site" evidence="1">
    <location>
        <position position="100"/>
    </location>
    <ligand>
        <name>Zn(2+)</name>
        <dbReference type="ChEBI" id="CHEBI:29105"/>
        <note>catalytic</note>
    </ligand>
</feature>
<feature type="binding site" evidence="1">
    <location>
        <position position="103"/>
    </location>
    <ligand>
        <name>Zn(2+)</name>
        <dbReference type="ChEBI" id="CHEBI:29105"/>
        <note>catalytic</note>
    </ligand>
</feature>
<protein>
    <recommendedName>
        <fullName>Blasticidin-S deaminase</fullName>
        <ecNumber>3.5.4.23</ecNumber>
    </recommendedName>
</protein>
<dbReference type="EC" id="3.5.4.23"/>
<dbReference type="EMBL" id="S81409">
    <property type="protein sequence ID" value="AAC60404.1"/>
    <property type="molecule type" value="Genomic_DNA"/>
</dbReference>
<dbReference type="PIR" id="JS0609">
    <property type="entry name" value="JS0609"/>
</dbReference>
<dbReference type="SMR" id="P33967"/>
<dbReference type="GO" id="GO:0005829">
    <property type="term" value="C:cytosol"/>
    <property type="evidence" value="ECO:0007669"/>
    <property type="project" value="TreeGrafter"/>
</dbReference>
<dbReference type="GO" id="GO:0047711">
    <property type="term" value="F:blasticidin-S deaminase activity"/>
    <property type="evidence" value="ECO:0007669"/>
    <property type="project" value="UniProtKB-EC"/>
</dbReference>
<dbReference type="GO" id="GO:0004126">
    <property type="term" value="F:cytidine deaminase activity"/>
    <property type="evidence" value="ECO:0007669"/>
    <property type="project" value="UniProtKB-ARBA"/>
</dbReference>
<dbReference type="GO" id="GO:0042802">
    <property type="term" value="F:identical protein binding"/>
    <property type="evidence" value="ECO:0007669"/>
    <property type="project" value="UniProtKB-ARBA"/>
</dbReference>
<dbReference type="GO" id="GO:0008270">
    <property type="term" value="F:zinc ion binding"/>
    <property type="evidence" value="ECO:0007669"/>
    <property type="project" value="InterPro"/>
</dbReference>
<dbReference type="GO" id="GO:0009972">
    <property type="term" value="P:cytidine deamination"/>
    <property type="evidence" value="ECO:0007669"/>
    <property type="project" value="TreeGrafter"/>
</dbReference>
<dbReference type="GO" id="GO:0046677">
    <property type="term" value="P:response to antibiotic"/>
    <property type="evidence" value="ECO:0007669"/>
    <property type="project" value="UniProtKB-KW"/>
</dbReference>
<dbReference type="CDD" id="cd01283">
    <property type="entry name" value="cytidine_deaminase"/>
    <property type="match status" value="1"/>
</dbReference>
<dbReference type="Gene3D" id="3.40.140.10">
    <property type="entry name" value="Cytidine Deaminase, domain 2"/>
    <property type="match status" value="1"/>
</dbReference>
<dbReference type="InterPro" id="IPR016192">
    <property type="entry name" value="APOBEC/CMP_deaminase_Zn-bd"/>
</dbReference>
<dbReference type="InterPro" id="IPR002125">
    <property type="entry name" value="CMP_dCMP_dom"/>
</dbReference>
<dbReference type="InterPro" id="IPR050202">
    <property type="entry name" value="Cyt/Deoxycyt_deaminase"/>
</dbReference>
<dbReference type="InterPro" id="IPR016193">
    <property type="entry name" value="Cytidine_deaminase-like"/>
</dbReference>
<dbReference type="NCBIfam" id="NF005314">
    <property type="entry name" value="PRK06848.1"/>
    <property type="match status" value="1"/>
</dbReference>
<dbReference type="PANTHER" id="PTHR11644">
    <property type="entry name" value="CYTIDINE DEAMINASE"/>
    <property type="match status" value="1"/>
</dbReference>
<dbReference type="PANTHER" id="PTHR11644:SF2">
    <property type="entry name" value="CYTIDINE DEAMINASE"/>
    <property type="match status" value="1"/>
</dbReference>
<dbReference type="Pfam" id="PF00383">
    <property type="entry name" value="dCMP_cyt_deam_1"/>
    <property type="match status" value="1"/>
</dbReference>
<dbReference type="SUPFAM" id="SSF53927">
    <property type="entry name" value="Cytidine deaminase-like"/>
    <property type="match status" value="1"/>
</dbReference>
<dbReference type="PROSITE" id="PS00903">
    <property type="entry name" value="CYT_DCMP_DEAMINASES_1"/>
    <property type="match status" value="1"/>
</dbReference>
<dbReference type="PROSITE" id="PS51747">
    <property type="entry name" value="CYT_DCMP_DEAMINASES_2"/>
    <property type="match status" value="1"/>
</dbReference>
<keyword id="KW-0046">Antibiotic resistance</keyword>
<keyword id="KW-0903">Direct protein sequencing</keyword>
<keyword id="KW-0378">Hydrolase</keyword>
<keyword id="KW-0479">Metal-binding</keyword>
<keyword id="KW-0862">Zinc</keyword>
<organism>
    <name type="scientific">Bacillus cereus</name>
    <dbReference type="NCBI Taxonomy" id="1396"/>
    <lineage>
        <taxon>Bacteria</taxon>
        <taxon>Bacillati</taxon>
        <taxon>Bacillota</taxon>
        <taxon>Bacilli</taxon>
        <taxon>Bacillales</taxon>
        <taxon>Bacillaceae</taxon>
        <taxon>Bacillus</taxon>
        <taxon>Bacillus cereus group</taxon>
    </lineage>
</organism>
<comment type="function">
    <text evidence="3">Catalyzes the deamination of the cytosine moiety of the antibiotics blasticidin S, cytomycin and acetylblasticidin S.</text>
</comment>
<comment type="catalytic activity">
    <reaction>
        <text>blasticidin S + H2O + H(+) = deaminohydroxyblasticidin S + NH4(+)</text>
        <dbReference type="Rhea" id="RHEA:10148"/>
        <dbReference type="ChEBI" id="CHEBI:15377"/>
        <dbReference type="ChEBI" id="CHEBI:15378"/>
        <dbReference type="ChEBI" id="CHEBI:28938"/>
        <dbReference type="ChEBI" id="CHEBI:57289"/>
        <dbReference type="ChEBI" id="CHEBI:57697"/>
        <dbReference type="EC" id="3.5.4.23"/>
    </reaction>
</comment>
<comment type="cofactor">
    <cofactor evidence="1">
        <name>Zn(2+)</name>
        <dbReference type="ChEBI" id="CHEBI:29105"/>
    </cofactor>
</comment>
<comment type="similarity">
    <text evidence="4">Belongs to the cytidine and deoxycytidylate deaminase family.</text>
</comment>
<proteinExistence type="evidence at protein level"/>
<name>BSR_BACCE</name>
<evidence type="ECO:0000250" key="1"/>
<evidence type="ECO:0000255" key="2">
    <source>
        <dbReference type="PROSITE-ProRule" id="PRU01083"/>
    </source>
</evidence>
<evidence type="ECO:0000269" key="3">
    <source>
    </source>
</evidence>
<evidence type="ECO:0000305" key="4"/>
<sequence length="140" mass="15573">MKTFNISQQDLELVEVATEKITMLYEDNKHHVGAAIRTKTGEIISAVHIEAYIGRVTVCAEAIAIGSAVSNGQKDFDTIVAVRHPYSDEVDRSIRVVSPCGMCRELISDYAPDCFVLIEMNGKLVKTTIEELIPLKYTRN</sequence>
<accession>P33967</accession>